<protein>
    <recommendedName>
        <fullName>Somatoliberin</fullName>
    </recommendedName>
    <alternativeName>
        <fullName>Growth hormone-releasing factor</fullName>
        <shortName>GRF</shortName>
    </alternativeName>
    <alternativeName>
        <fullName>Growth hormone-releasing hormone</fullName>
        <shortName>GHRH</shortName>
    </alternativeName>
</protein>
<keyword id="KW-1185">Reference proteome</keyword>
<keyword id="KW-0964">Secreted</keyword>
<keyword id="KW-0732">Signal</keyword>
<name>SLIB_MOUSE</name>
<sequence>MLLWVLFVILILTSGSHCSLPPSPPFRMQRHVDAIFTTNYRKLLSQLYARKVIQDIMNKQGERIQEQRARLSRQEDSMWTEDKQMTLESILQGFPRMKPSADA</sequence>
<dbReference type="EMBL" id="M31654">
    <property type="protein sequence ID" value="AAA37691.1"/>
    <property type="molecule type" value="mRNA"/>
</dbReference>
<dbReference type="EMBL" id="M31658">
    <property type="protein sequence ID" value="AAA37739.1"/>
    <property type="molecule type" value="mRNA"/>
</dbReference>
<dbReference type="EMBL" id="AK018796">
    <property type="protein sequence ID" value="BAB31418.1"/>
    <property type="molecule type" value="mRNA"/>
</dbReference>
<dbReference type="EMBL" id="BC068204">
    <property type="protein sequence ID" value="AAH68204.1"/>
    <property type="molecule type" value="mRNA"/>
</dbReference>
<dbReference type="CCDS" id="CCDS16976.1"/>
<dbReference type="PIR" id="A41410">
    <property type="entry name" value="A41410"/>
</dbReference>
<dbReference type="RefSeq" id="NP_001316612.1">
    <property type="nucleotide sequence ID" value="NM_001329683.1"/>
</dbReference>
<dbReference type="RefSeq" id="NP_034415.1">
    <property type="nucleotide sequence ID" value="NM_010285.3"/>
</dbReference>
<dbReference type="SMR" id="P16043"/>
<dbReference type="BioGRID" id="199916">
    <property type="interactions" value="2"/>
</dbReference>
<dbReference type="FunCoup" id="P16043">
    <property type="interactions" value="378"/>
</dbReference>
<dbReference type="STRING" id="10090.ENSMUSP00000029172"/>
<dbReference type="PaxDb" id="10090-ENSMUSP00000029172"/>
<dbReference type="Antibodypedia" id="11938">
    <property type="antibodies" value="283 antibodies from 27 providers"/>
</dbReference>
<dbReference type="DNASU" id="14601"/>
<dbReference type="Ensembl" id="ENSMUST00000029172.2">
    <property type="protein sequence ID" value="ENSMUSP00000029172.2"/>
    <property type="gene ID" value="ENSMUSG00000027643.10"/>
</dbReference>
<dbReference type="Ensembl" id="ENSMUST00000109536.8">
    <property type="protein sequence ID" value="ENSMUSP00000105162.2"/>
    <property type="gene ID" value="ENSMUSG00000027643.10"/>
</dbReference>
<dbReference type="GeneID" id="14601"/>
<dbReference type="KEGG" id="mmu:14601"/>
<dbReference type="UCSC" id="uc008nox.1">
    <property type="organism name" value="mouse"/>
</dbReference>
<dbReference type="AGR" id="MGI:95709"/>
<dbReference type="CTD" id="2691"/>
<dbReference type="MGI" id="MGI:95709">
    <property type="gene designation" value="Ghrh"/>
</dbReference>
<dbReference type="VEuPathDB" id="HostDB:ENSMUSG00000027643"/>
<dbReference type="eggNOG" id="ENOG502S2N6">
    <property type="taxonomic scope" value="Eukaryota"/>
</dbReference>
<dbReference type="GeneTree" id="ENSGT00950000183154"/>
<dbReference type="HOGENOM" id="CLU_174932_0_0_1"/>
<dbReference type="InParanoid" id="P16043"/>
<dbReference type="OMA" id="DSVWTDQ"/>
<dbReference type="OrthoDB" id="9931004at2759"/>
<dbReference type="PhylomeDB" id="P16043"/>
<dbReference type="TreeFam" id="TF353187"/>
<dbReference type="Reactome" id="R-MMU-418555">
    <property type="pathway name" value="G alpha (s) signalling events"/>
</dbReference>
<dbReference type="Reactome" id="R-MMU-420092">
    <property type="pathway name" value="Glucagon-type ligand receptors"/>
</dbReference>
<dbReference type="BioGRID-ORCS" id="14601">
    <property type="hits" value="2 hits in 77 CRISPR screens"/>
</dbReference>
<dbReference type="ChiTaRS" id="Ghrh">
    <property type="organism name" value="mouse"/>
</dbReference>
<dbReference type="PRO" id="PR:P16043"/>
<dbReference type="Proteomes" id="UP000000589">
    <property type="component" value="Chromosome 2"/>
</dbReference>
<dbReference type="RNAct" id="P16043">
    <property type="molecule type" value="protein"/>
</dbReference>
<dbReference type="Bgee" id="ENSMUSG00000027643">
    <property type="expression patterns" value="Expressed in placenta labyrinth and 43 other cell types or tissues"/>
</dbReference>
<dbReference type="ExpressionAtlas" id="P16043">
    <property type="expression patterns" value="baseline and differential"/>
</dbReference>
<dbReference type="GO" id="GO:0005615">
    <property type="term" value="C:extracellular space"/>
    <property type="evidence" value="ECO:0000314"/>
    <property type="project" value="MGI"/>
</dbReference>
<dbReference type="GO" id="GO:0043195">
    <property type="term" value="C:terminal bouton"/>
    <property type="evidence" value="ECO:0000314"/>
    <property type="project" value="MGI"/>
</dbReference>
<dbReference type="GO" id="GO:0016608">
    <property type="term" value="F:growth hormone-releasing hormone activity"/>
    <property type="evidence" value="ECO:0007669"/>
    <property type="project" value="Ensembl"/>
</dbReference>
<dbReference type="GO" id="GO:0031770">
    <property type="term" value="F:growth hormone-releasing hormone receptor binding"/>
    <property type="evidence" value="ECO:0000353"/>
    <property type="project" value="BHF-UCL"/>
</dbReference>
<dbReference type="GO" id="GO:0005184">
    <property type="term" value="F:neuropeptide hormone activity"/>
    <property type="evidence" value="ECO:0007669"/>
    <property type="project" value="InterPro"/>
</dbReference>
<dbReference type="GO" id="GO:0021984">
    <property type="term" value="P:adenohypophysis development"/>
    <property type="evidence" value="ECO:0000315"/>
    <property type="project" value="MGI"/>
</dbReference>
<dbReference type="GO" id="GO:0007189">
    <property type="term" value="P:adenylate cyclase-activating G protein-coupled receptor signaling pathway"/>
    <property type="evidence" value="ECO:0000314"/>
    <property type="project" value="MGI"/>
</dbReference>
<dbReference type="GO" id="GO:0030252">
    <property type="term" value="P:growth hormone secretion"/>
    <property type="evidence" value="ECO:0000314"/>
    <property type="project" value="MGI"/>
</dbReference>
<dbReference type="GO" id="GO:0046879">
    <property type="term" value="P:hormone secretion"/>
    <property type="evidence" value="ECO:0000315"/>
    <property type="project" value="MGI"/>
</dbReference>
<dbReference type="GO" id="GO:0035264">
    <property type="term" value="P:multicellular organism growth"/>
    <property type="evidence" value="ECO:0007669"/>
    <property type="project" value="Ensembl"/>
</dbReference>
<dbReference type="GO" id="GO:0008284">
    <property type="term" value="P:positive regulation of cell population proliferation"/>
    <property type="evidence" value="ECO:0000315"/>
    <property type="project" value="BHF-UCL"/>
</dbReference>
<dbReference type="GO" id="GO:0060124">
    <property type="term" value="P:positive regulation of growth hormone secretion"/>
    <property type="evidence" value="ECO:0000266"/>
    <property type="project" value="MGI"/>
</dbReference>
<dbReference type="GO" id="GO:0046887">
    <property type="term" value="P:positive regulation of hormone secretion"/>
    <property type="evidence" value="ECO:0000315"/>
    <property type="project" value="MGI"/>
</dbReference>
<dbReference type="GO" id="GO:0040018">
    <property type="term" value="P:positive regulation of multicellular organism growth"/>
    <property type="evidence" value="ECO:0000315"/>
    <property type="project" value="MGI"/>
</dbReference>
<dbReference type="GO" id="GO:0032094">
    <property type="term" value="P:response to food"/>
    <property type="evidence" value="ECO:0000314"/>
    <property type="project" value="MGI"/>
</dbReference>
<dbReference type="InterPro" id="IPR000532">
    <property type="entry name" value="Glucagon_GIP_secretin_VIP"/>
</dbReference>
<dbReference type="InterPro" id="IPR046963">
    <property type="entry name" value="VIP/GHRH-like"/>
</dbReference>
<dbReference type="PANTHER" id="PTHR11213">
    <property type="entry name" value="GLUCAGON-FAMILY NEUROPEPTIDE"/>
    <property type="match status" value="1"/>
</dbReference>
<dbReference type="PANTHER" id="PTHR11213:SF6">
    <property type="entry name" value="SOMATOLIBERIN"/>
    <property type="match status" value="1"/>
</dbReference>
<dbReference type="Pfam" id="PF00123">
    <property type="entry name" value="Hormone_2"/>
    <property type="match status" value="1"/>
</dbReference>
<dbReference type="SMART" id="SM00070">
    <property type="entry name" value="GLUCA"/>
    <property type="match status" value="1"/>
</dbReference>
<dbReference type="PROSITE" id="PS00260">
    <property type="entry name" value="GLUCAGON"/>
    <property type="match status" value="1"/>
</dbReference>
<feature type="signal peptide" evidence="1">
    <location>
        <begin position="1"/>
        <end position="19"/>
    </location>
</feature>
<feature type="propeptide" id="PRO_0000011444">
    <location>
        <begin position="20"/>
        <end position="30"/>
    </location>
</feature>
<feature type="peptide" id="PRO_0000011445" description="Somatoliberin">
    <location>
        <begin position="31"/>
        <end position="72"/>
    </location>
</feature>
<feature type="propeptide" id="PRO_0000011446">
    <location>
        <begin position="74"/>
        <end position="103"/>
    </location>
</feature>
<reference key="1">
    <citation type="journal article" date="1989" name="Mol. Endocrinol.">
        <title>Mouse growth-hormone-releasing hormone: precursor structure and expression in brain and placenta.</title>
        <authorList>
            <person name="Suhr S.T."/>
            <person name="Rahal J.O."/>
            <person name="Mayo K.E."/>
        </authorList>
    </citation>
    <scope>NUCLEOTIDE SEQUENCE [MRNA]</scope>
</reference>
<reference key="2">
    <citation type="journal article" date="1989" name="Mol. Endocrinol.">
        <title>Cloning and characterization of mouse growth hormone-releasing hormone (GRH) complementary DNA: increased GRH messenger RNA levels in the growth hormone-deficient lit/lit mouse.</title>
        <authorList>
            <person name="Frohman M.A."/>
            <person name="Downs T.R."/>
            <person name="Chomczynski P."/>
            <person name="Frohman L.A."/>
        </authorList>
    </citation>
    <scope>NUCLEOTIDE SEQUENCE [MRNA]</scope>
</reference>
<reference key="3">
    <citation type="journal article" date="2005" name="Science">
        <title>The transcriptional landscape of the mammalian genome.</title>
        <authorList>
            <person name="Carninci P."/>
            <person name="Kasukawa T."/>
            <person name="Katayama S."/>
            <person name="Gough J."/>
            <person name="Frith M.C."/>
            <person name="Maeda N."/>
            <person name="Oyama R."/>
            <person name="Ravasi T."/>
            <person name="Lenhard B."/>
            <person name="Wells C."/>
            <person name="Kodzius R."/>
            <person name="Shimokawa K."/>
            <person name="Bajic V.B."/>
            <person name="Brenner S.E."/>
            <person name="Batalov S."/>
            <person name="Forrest A.R."/>
            <person name="Zavolan M."/>
            <person name="Davis M.J."/>
            <person name="Wilming L.G."/>
            <person name="Aidinis V."/>
            <person name="Allen J.E."/>
            <person name="Ambesi-Impiombato A."/>
            <person name="Apweiler R."/>
            <person name="Aturaliya R.N."/>
            <person name="Bailey T.L."/>
            <person name="Bansal M."/>
            <person name="Baxter L."/>
            <person name="Beisel K.W."/>
            <person name="Bersano T."/>
            <person name="Bono H."/>
            <person name="Chalk A.M."/>
            <person name="Chiu K.P."/>
            <person name="Choudhary V."/>
            <person name="Christoffels A."/>
            <person name="Clutterbuck D.R."/>
            <person name="Crowe M.L."/>
            <person name="Dalla E."/>
            <person name="Dalrymple B.P."/>
            <person name="de Bono B."/>
            <person name="Della Gatta G."/>
            <person name="di Bernardo D."/>
            <person name="Down T."/>
            <person name="Engstrom P."/>
            <person name="Fagiolini M."/>
            <person name="Faulkner G."/>
            <person name="Fletcher C.F."/>
            <person name="Fukushima T."/>
            <person name="Furuno M."/>
            <person name="Futaki S."/>
            <person name="Gariboldi M."/>
            <person name="Georgii-Hemming P."/>
            <person name="Gingeras T.R."/>
            <person name="Gojobori T."/>
            <person name="Green R.E."/>
            <person name="Gustincich S."/>
            <person name="Harbers M."/>
            <person name="Hayashi Y."/>
            <person name="Hensch T.K."/>
            <person name="Hirokawa N."/>
            <person name="Hill D."/>
            <person name="Huminiecki L."/>
            <person name="Iacono M."/>
            <person name="Ikeo K."/>
            <person name="Iwama A."/>
            <person name="Ishikawa T."/>
            <person name="Jakt M."/>
            <person name="Kanapin A."/>
            <person name="Katoh M."/>
            <person name="Kawasawa Y."/>
            <person name="Kelso J."/>
            <person name="Kitamura H."/>
            <person name="Kitano H."/>
            <person name="Kollias G."/>
            <person name="Krishnan S.P."/>
            <person name="Kruger A."/>
            <person name="Kummerfeld S.K."/>
            <person name="Kurochkin I.V."/>
            <person name="Lareau L.F."/>
            <person name="Lazarevic D."/>
            <person name="Lipovich L."/>
            <person name="Liu J."/>
            <person name="Liuni S."/>
            <person name="McWilliam S."/>
            <person name="Madan Babu M."/>
            <person name="Madera M."/>
            <person name="Marchionni L."/>
            <person name="Matsuda H."/>
            <person name="Matsuzawa S."/>
            <person name="Miki H."/>
            <person name="Mignone F."/>
            <person name="Miyake S."/>
            <person name="Morris K."/>
            <person name="Mottagui-Tabar S."/>
            <person name="Mulder N."/>
            <person name="Nakano N."/>
            <person name="Nakauchi H."/>
            <person name="Ng P."/>
            <person name="Nilsson R."/>
            <person name="Nishiguchi S."/>
            <person name="Nishikawa S."/>
            <person name="Nori F."/>
            <person name="Ohara O."/>
            <person name="Okazaki Y."/>
            <person name="Orlando V."/>
            <person name="Pang K.C."/>
            <person name="Pavan W.J."/>
            <person name="Pavesi G."/>
            <person name="Pesole G."/>
            <person name="Petrovsky N."/>
            <person name="Piazza S."/>
            <person name="Reed J."/>
            <person name="Reid J.F."/>
            <person name="Ring B.Z."/>
            <person name="Ringwald M."/>
            <person name="Rost B."/>
            <person name="Ruan Y."/>
            <person name="Salzberg S.L."/>
            <person name="Sandelin A."/>
            <person name="Schneider C."/>
            <person name="Schoenbach C."/>
            <person name="Sekiguchi K."/>
            <person name="Semple C.A."/>
            <person name="Seno S."/>
            <person name="Sessa L."/>
            <person name="Sheng Y."/>
            <person name="Shibata Y."/>
            <person name="Shimada H."/>
            <person name="Shimada K."/>
            <person name="Silva D."/>
            <person name="Sinclair B."/>
            <person name="Sperling S."/>
            <person name="Stupka E."/>
            <person name="Sugiura K."/>
            <person name="Sultana R."/>
            <person name="Takenaka Y."/>
            <person name="Taki K."/>
            <person name="Tammoja K."/>
            <person name="Tan S.L."/>
            <person name="Tang S."/>
            <person name="Taylor M.S."/>
            <person name="Tegner J."/>
            <person name="Teichmann S.A."/>
            <person name="Ueda H.R."/>
            <person name="van Nimwegen E."/>
            <person name="Verardo R."/>
            <person name="Wei C.L."/>
            <person name="Yagi K."/>
            <person name="Yamanishi H."/>
            <person name="Zabarovsky E."/>
            <person name="Zhu S."/>
            <person name="Zimmer A."/>
            <person name="Hide W."/>
            <person name="Bult C."/>
            <person name="Grimmond S.M."/>
            <person name="Teasdale R.D."/>
            <person name="Liu E.T."/>
            <person name="Brusic V."/>
            <person name="Quackenbush J."/>
            <person name="Wahlestedt C."/>
            <person name="Mattick J.S."/>
            <person name="Hume D.A."/>
            <person name="Kai C."/>
            <person name="Sasaki D."/>
            <person name="Tomaru Y."/>
            <person name="Fukuda S."/>
            <person name="Kanamori-Katayama M."/>
            <person name="Suzuki M."/>
            <person name="Aoki J."/>
            <person name="Arakawa T."/>
            <person name="Iida J."/>
            <person name="Imamura K."/>
            <person name="Itoh M."/>
            <person name="Kato T."/>
            <person name="Kawaji H."/>
            <person name="Kawagashira N."/>
            <person name="Kawashima T."/>
            <person name="Kojima M."/>
            <person name="Kondo S."/>
            <person name="Konno H."/>
            <person name="Nakano K."/>
            <person name="Ninomiya N."/>
            <person name="Nishio T."/>
            <person name="Okada M."/>
            <person name="Plessy C."/>
            <person name="Shibata K."/>
            <person name="Shiraki T."/>
            <person name="Suzuki S."/>
            <person name="Tagami M."/>
            <person name="Waki K."/>
            <person name="Watahiki A."/>
            <person name="Okamura-Oho Y."/>
            <person name="Suzuki H."/>
            <person name="Kawai J."/>
            <person name="Hayashizaki Y."/>
        </authorList>
    </citation>
    <scope>NUCLEOTIDE SEQUENCE [LARGE SCALE MRNA]</scope>
    <source>
        <strain>C57BL/6J</strain>
        <tissue>Placenta</tissue>
    </source>
</reference>
<reference key="4">
    <citation type="journal article" date="2004" name="Genome Res.">
        <title>The status, quality, and expansion of the NIH full-length cDNA project: the Mammalian Gene Collection (MGC).</title>
        <authorList>
            <consortium name="The MGC Project Team"/>
        </authorList>
    </citation>
    <scope>NUCLEOTIDE SEQUENCE [LARGE SCALE MRNA]</scope>
    <source>
        <tissue>Uterus</tissue>
    </source>
</reference>
<comment type="function">
    <text>GRF is released by the hypothalamus and acts on the adenohypophyse to stimulate the secretion of growth hormone.</text>
</comment>
<comment type="subcellular location">
    <subcellularLocation>
        <location>Secreted</location>
    </subcellularLocation>
</comment>
<comment type="similarity">
    <text evidence="2">Belongs to the glucagon family.</text>
</comment>
<evidence type="ECO:0000255" key="1"/>
<evidence type="ECO:0000305" key="2"/>
<accession>P16043</accession>
<proteinExistence type="inferred from homology"/>
<gene>
    <name type="primary">Ghrh</name>
</gene>
<organism>
    <name type="scientific">Mus musculus</name>
    <name type="common">Mouse</name>
    <dbReference type="NCBI Taxonomy" id="10090"/>
    <lineage>
        <taxon>Eukaryota</taxon>
        <taxon>Metazoa</taxon>
        <taxon>Chordata</taxon>
        <taxon>Craniata</taxon>
        <taxon>Vertebrata</taxon>
        <taxon>Euteleostomi</taxon>
        <taxon>Mammalia</taxon>
        <taxon>Eutheria</taxon>
        <taxon>Euarchontoglires</taxon>
        <taxon>Glires</taxon>
        <taxon>Rodentia</taxon>
        <taxon>Myomorpha</taxon>
        <taxon>Muroidea</taxon>
        <taxon>Muridae</taxon>
        <taxon>Murinae</taxon>
        <taxon>Mus</taxon>
        <taxon>Mus</taxon>
    </lineage>
</organism>